<reference key="1">
    <citation type="journal article" date="2006" name="Nat. Biotechnol.">
        <title>Complete genome sequence of the entomopathogenic and metabolically versatile soil bacterium Pseudomonas entomophila.</title>
        <authorList>
            <person name="Vodovar N."/>
            <person name="Vallenet D."/>
            <person name="Cruveiller S."/>
            <person name="Rouy Z."/>
            <person name="Barbe V."/>
            <person name="Acosta C."/>
            <person name="Cattolico L."/>
            <person name="Jubin C."/>
            <person name="Lajus A."/>
            <person name="Segurens B."/>
            <person name="Vacherie B."/>
            <person name="Wincker P."/>
            <person name="Weissenbach J."/>
            <person name="Lemaitre B."/>
            <person name="Medigue C."/>
            <person name="Boccard F."/>
        </authorList>
    </citation>
    <scope>NUCLEOTIDE SEQUENCE [LARGE SCALE GENOMIC DNA]</scope>
    <source>
        <strain>L48</strain>
    </source>
</reference>
<evidence type="ECO:0000255" key="1">
    <source>
        <dbReference type="HAMAP-Rule" id="MF_00199"/>
    </source>
</evidence>
<accession>Q1IG22</accession>
<dbReference type="EC" id="3.6.1.41" evidence="1"/>
<dbReference type="EMBL" id="CT573326">
    <property type="protein sequence ID" value="CAK13380.1"/>
    <property type="molecule type" value="Genomic_DNA"/>
</dbReference>
<dbReference type="RefSeq" id="WP_011531837.1">
    <property type="nucleotide sequence ID" value="NC_008027.1"/>
</dbReference>
<dbReference type="SMR" id="Q1IG22"/>
<dbReference type="STRING" id="384676.PSEEN0426"/>
<dbReference type="GeneID" id="32803761"/>
<dbReference type="KEGG" id="pen:PSEEN0426"/>
<dbReference type="eggNOG" id="COG0639">
    <property type="taxonomic scope" value="Bacteria"/>
</dbReference>
<dbReference type="HOGENOM" id="CLU_056184_2_0_6"/>
<dbReference type="OrthoDB" id="9807890at2"/>
<dbReference type="Proteomes" id="UP000000658">
    <property type="component" value="Chromosome"/>
</dbReference>
<dbReference type="GO" id="GO:0008803">
    <property type="term" value="F:bis(5'-nucleosyl)-tetraphosphatase (symmetrical) activity"/>
    <property type="evidence" value="ECO:0007669"/>
    <property type="project" value="UniProtKB-UniRule"/>
</dbReference>
<dbReference type="CDD" id="cd07422">
    <property type="entry name" value="MPP_ApaH"/>
    <property type="match status" value="1"/>
</dbReference>
<dbReference type="Gene3D" id="3.60.21.10">
    <property type="match status" value="1"/>
</dbReference>
<dbReference type="HAMAP" id="MF_00199">
    <property type="entry name" value="ApaH"/>
    <property type="match status" value="1"/>
</dbReference>
<dbReference type="InterPro" id="IPR004617">
    <property type="entry name" value="ApaH"/>
</dbReference>
<dbReference type="InterPro" id="IPR004843">
    <property type="entry name" value="Calcineurin-like_PHP_ApaH"/>
</dbReference>
<dbReference type="InterPro" id="IPR029052">
    <property type="entry name" value="Metallo-depent_PP-like"/>
</dbReference>
<dbReference type="NCBIfam" id="TIGR00668">
    <property type="entry name" value="apaH"/>
    <property type="match status" value="1"/>
</dbReference>
<dbReference type="NCBIfam" id="NF001204">
    <property type="entry name" value="PRK00166.1"/>
    <property type="match status" value="1"/>
</dbReference>
<dbReference type="PANTHER" id="PTHR40942">
    <property type="match status" value="1"/>
</dbReference>
<dbReference type="PANTHER" id="PTHR40942:SF4">
    <property type="entry name" value="CYTOCHROME C5"/>
    <property type="match status" value="1"/>
</dbReference>
<dbReference type="Pfam" id="PF00149">
    <property type="entry name" value="Metallophos"/>
    <property type="match status" value="1"/>
</dbReference>
<dbReference type="PIRSF" id="PIRSF000903">
    <property type="entry name" value="B5n-ttraPtase_sm"/>
    <property type="match status" value="1"/>
</dbReference>
<dbReference type="SUPFAM" id="SSF56300">
    <property type="entry name" value="Metallo-dependent phosphatases"/>
    <property type="match status" value="1"/>
</dbReference>
<sequence>MATYAVGDLQGCLQPLKCLLERAHFNPAVDRLWLVGDLVNRGPESLETLRYLYSIRDSLVCVLGNHDLHLLAAWHNVERLKKSDTLREIIEAPDADQLFDWLRRQKLLHYDEPRGIAMVHAGIPPQWTLGKALELAAEVEEVLRDDGRLKLYLDGMYGNEPNKWSKDLAGVERLRVITNYFTRMRFCTATGKLDLKSKEGLESAPKGYKPWFDHPDRRSRHVKIIFGHWAALEGRVDVPGVIALDTGCVWGGAMTLYNVDSGEYHRCDCTREGTPRPAALNNDQP</sequence>
<keyword id="KW-0378">Hydrolase</keyword>
<protein>
    <recommendedName>
        <fullName evidence="1">Bis(5'-nucleosyl)-tetraphosphatase, symmetrical</fullName>
        <ecNumber evidence="1">3.6.1.41</ecNumber>
    </recommendedName>
    <alternativeName>
        <fullName evidence="1">Ap4A hydrolase</fullName>
    </alternativeName>
    <alternativeName>
        <fullName evidence="1">Diadenosine 5',5'''-P1,P4-tetraphosphate pyrophosphohydrolase</fullName>
    </alternativeName>
    <alternativeName>
        <fullName evidence="1">Diadenosine tetraphosphatase</fullName>
    </alternativeName>
</protein>
<organism>
    <name type="scientific">Pseudomonas entomophila (strain L48)</name>
    <dbReference type="NCBI Taxonomy" id="384676"/>
    <lineage>
        <taxon>Bacteria</taxon>
        <taxon>Pseudomonadati</taxon>
        <taxon>Pseudomonadota</taxon>
        <taxon>Gammaproteobacteria</taxon>
        <taxon>Pseudomonadales</taxon>
        <taxon>Pseudomonadaceae</taxon>
        <taxon>Pseudomonas</taxon>
    </lineage>
</organism>
<name>APAH_PSEE4</name>
<feature type="chain" id="PRO_1000012077" description="Bis(5'-nucleosyl)-tetraphosphatase, symmetrical">
    <location>
        <begin position="1"/>
        <end position="285"/>
    </location>
</feature>
<comment type="function">
    <text evidence="1">Hydrolyzes diadenosine 5',5'''-P1,P4-tetraphosphate to yield ADP.</text>
</comment>
<comment type="catalytic activity">
    <reaction evidence="1">
        <text>P(1),P(4)-bis(5'-adenosyl) tetraphosphate + H2O = 2 ADP + 2 H(+)</text>
        <dbReference type="Rhea" id="RHEA:24252"/>
        <dbReference type="ChEBI" id="CHEBI:15377"/>
        <dbReference type="ChEBI" id="CHEBI:15378"/>
        <dbReference type="ChEBI" id="CHEBI:58141"/>
        <dbReference type="ChEBI" id="CHEBI:456216"/>
        <dbReference type="EC" id="3.6.1.41"/>
    </reaction>
</comment>
<comment type="similarity">
    <text evidence="1">Belongs to the Ap4A hydrolase family.</text>
</comment>
<gene>
    <name evidence="1" type="primary">apaH</name>
    <name type="ordered locus">PSEEN0426</name>
</gene>
<proteinExistence type="inferred from homology"/>